<accession>A0A1L4BJ42</accession>
<evidence type="ECO:0000250" key="1">
    <source>
        <dbReference type="UniProtKB" id="P21817"/>
    </source>
</evidence>
<evidence type="ECO:0000250" key="2">
    <source>
        <dbReference type="UniProtKB" id="P59868"/>
    </source>
</evidence>
<evidence type="ECO:0000250" key="3">
    <source>
        <dbReference type="UniProtKB" id="P60254"/>
    </source>
</evidence>
<evidence type="ECO:0000255" key="4"/>
<evidence type="ECO:0000269" key="5">
    <source>
    </source>
</evidence>
<evidence type="ECO:0000269" key="6">
    <source>
    </source>
</evidence>
<evidence type="ECO:0000303" key="7">
    <source>
    </source>
</evidence>
<evidence type="ECO:0000303" key="8">
    <source>
    </source>
</evidence>
<evidence type="ECO:0000305" key="9"/>
<evidence type="ECO:0000305" key="10">
    <source>
    </source>
</evidence>
<reference key="1">
    <citation type="journal article" date="2016" name="Toxicon">
        <title>The first report on transcriptome analysis of the venom gland of Iranian scorpion, Hemiscorpius lepturus.</title>
        <authorList>
            <person name="Kazemi-Lomedasht F."/>
            <person name="Khalaj V."/>
            <person name="Bagheri K.P."/>
            <person name="Behdani M."/>
            <person name="Shahbazzadeh D."/>
        </authorList>
    </citation>
    <scope>NUCLEOTIDE SEQUENCE [MRNA]</scope>
    <source>
        <tissue>Venom gland</tissue>
    </source>
</reference>
<reference key="2">
    <citation type="journal article" date="2007" name="Biochem. J.">
        <title>Hemicalcin, a new toxin from the Iranian scorpion Hemiscorpius lepturus which is active on ryanodine-sensitive Ca2+ channels.</title>
        <authorList>
            <person name="Shahbazzadeh D."/>
            <person name="Srairi-Abid N."/>
            <person name="Feng W."/>
            <person name="Ram N."/>
            <person name="Borchani L."/>
            <person name="Ronjat M."/>
            <person name="Akbari A."/>
            <person name="Pessah I.N."/>
            <person name="De Waard M."/>
            <person name="El Ayeb M."/>
        </authorList>
    </citation>
    <scope>PROTEIN SEQUENCE OF 34-66</scope>
    <scope>FUNCTION</scope>
    <scope>BIOASSAY</scope>
    <scope>TOXIC DOSE</scope>
    <scope>SUBCELLULAR LOCATION</scope>
    <scope>MASS SPECTROMETRY</scope>
    <scope>3D-STRUCTURE MODELING</scope>
    <source>
        <tissue>Venom</tissue>
    </source>
</reference>
<reference key="3">
    <citation type="journal article" date="2016" name="J. Gen. Physiol.">
        <title>Structure-function relationships of peptides forming the calcin family of ryanodine receptor ligands.</title>
        <authorList>
            <person name="Xiao L."/>
            <person name="Gurrola G.B."/>
            <person name="Zhang J."/>
            <person name="Valdivia C.R."/>
            <person name="SanMartin M."/>
            <person name="Zamudio F.Z."/>
            <person name="Zhang L."/>
            <person name="Possani L.D."/>
            <person name="Valdivia H.H."/>
        </authorList>
    </citation>
    <scope>FUNCTION</scope>
    <scope>SYNTHESIS OF 34-66</scope>
    <scope>3D-STRUCTURE MODELING</scope>
</reference>
<proteinExistence type="evidence at protein level"/>
<organism>
    <name type="scientific">Hemiscorpius lepturus</name>
    <name type="common">Scorpion</name>
    <dbReference type="NCBI Taxonomy" id="520031"/>
    <lineage>
        <taxon>Eukaryota</taxon>
        <taxon>Metazoa</taxon>
        <taxon>Ecdysozoa</taxon>
        <taxon>Arthropoda</taxon>
        <taxon>Chelicerata</taxon>
        <taxon>Arachnida</taxon>
        <taxon>Scorpiones</taxon>
        <taxon>Iurida</taxon>
        <taxon>Scorpionoidea</taxon>
        <taxon>Hemiscorpiidae</taxon>
    </lineage>
</organism>
<comment type="function">
    <text evidence="1 2 3 5 6">This toxin stabilizes ryanodine receptor 1 (RyR1) opening in a long-lasting subconductance state (20% and 38% of the full conductance state have been found) (PubMed:17291197, PubMed:27114612). It promotes an increase in the opening probability at intermediate concentration (PubMed:17291197). Furthermore, it triggers calcium release from sarcoplasmic vesicles (68 nM are enough to induce a sharp release, and 45% of the total calcium is released after toxin (100 nM) addition) probably by acting as a cell-penetrating peptide (CPP) (PubMed:17291197, PubMed:27114612). In addition, it has been shown to dose-dependently stimulate ryanodine binding to RyR1 (EC(50)=6.9-71 nM) (PubMed:17291197, PubMed:27114612). It also augments the bell-shaped calcium-[3H]ryanodine binding curve that is maximal at about 10 uM calcium concentration (PubMed:27114612). It binds a different site as ryanodine (By similarity). It acts synergistically with caffeine (By similarity). In vivo, intracerebroventricular injection into mice induces neurotoxic symptoms, followed by death (PubMed:17291197).</text>
</comment>
<comment type="subcellular location">
    <subcellularLocation>
        <location evidence="5">Secreted</location>
    </subcellularLocation>
</comment>
<comment type="tissue specificity">
    <text evidence="10">Expressed by the venom gland.</text>
</comment>
<comment type="domain">
    <text evidence="2">The presence of a 'disulfide through disulfide knot' structurally defines this protein as a knottin.</text>
</comment>
<comment type="mass spectrometry"/>
<comment type="toxic dose">
    <text evidence="5">LD(50) is 15 ug/kg by intracerebroventricular injection into mice.</text>
</comment>
<comment type="similarity">
    <text evidence="9">Belongs to the scorpion calcin family.</text>
</comment>
<dbReference type="EMBL" id="KX874539">
    <property type="protein sequence ID" value="API81327.1"/>
    <property type="molecule type" value="mRNA"/>
</dbReference>
<dbReference type="SMR" id="A0A1L4BJ42"/>
<dbReference type="GO" id="GO:0005576">
    <property type="term" value="C:extracellular region"/>
    <property type="evidence" value="ECO:0007669"/>
    <property type="project" value="UniProtKB-SubCell"/>
</dbReference>
<dbReference type="GO" id="GO:0019855">
    <property type="term" value="F:calcium channel inhibitor activity"/>
    <property type="evidence" value="ECO:0007669"/>
    <property type="project" value="InterPro"/>
</dbReference>
<dbReference type="GO" id="GO:0090729">
    <property type="term" value="F:toxin activity"/>
    <property type="evidence" value="ECO:0007669"/>
    <property type="project" value="UniProtKB-KW"/>
</dbReference>
<dbReference type="InterPro" id="IPR012632">
    <property type="entry name" value="Scorpion_calcine"/>
</dbReference>
<dbReference type="Pfam" id="PF08099">
    <property type="entry name" value="Toxin_27"/>
    <property type="match status" value="1"/>
</dbReference>
<dbReference type="SUPFAM" id="SSF57059">
    <property type="entry name" value="omega toxin-like"/>
    <property type="match status" value="1"/>
</dbReference>
<dbReference type="PROSITE" id="PS60028">
    <property type="entry name" value="SCORPION_CALCINE"/>
    <property type="match status" value="1"/>
</dbReference>
<name>CAHEM_HEMLE</name>
<protein>
    <recommendedName>
        <fullName evidence="7">Hemicalcin</fullName>
        <shortName evidence="7">HCa</shortName>
        <shortName evidence="8">HmCa</shortName>
    </recommendedName>
</protein>
<sequence>MRASLFIVIFVVSFITISCLSTDDEEARWIEKRGDCLPHLKLCKADKDCCSKKCKRRGTNPEKRCR</sequence>
<keyword id="KW-0108">Calcium channel impairing toxin</keyword>
<keyword id="KW-0165">Cleavage on pair of basic residues</keyword>
<keyword id="KW-0903">Direct protein sequencing</keyword>
<keyword id="KW-1015">Disulfide bond</keyword>
<keyword id="KW-0872">Ion channel impairing toxin</keyword>
<keyword id="KW-0960">Knottin</keyword>
<keyword id="KW-0528">Neurotoxin</keyword>
<keyword id="KW-1219">Ryanodine-sensitive calcium-release channel impairing toxin</keyword>
<keyword id="KW-0964">Secreted</keyword>
<keyword id="KW-0732">Signal</keyword>
<keyword id="KW-0800">Toxin</keyword>
<feature type="signal peptide" evidence="4">
    <location>
        <begin position="1"/>
        <end position="21"/>
    </location>
</feature>
<feature type="propeptide" id="PRO_0000446294" evidence="9">
    <location>
        <begin position="22"/>
        <end position="33"/>
    </location>
</feature>
<feature type="chain" id="PRO_5012476333" description="Hemicalcin" evidence="5">
    <location>
        <begin position="34"/>
        <end position="66"/>
    </location>
</feature>
<feature type="region of interest" description="Essential for stimulation of [3H]ryanodine binding to RYR1" evidence="2 3">
    <location>
        <begin position="55"/>
        <end position="57"/>
    </location>
</feature>
<feature type="site" description="Essential for stimulation of [3H]ryanodine binding to RYR1" evidence="2">
    <location>
        <position position="64"/>
    </location>
</feature>
<feature type="site" description="Essential for stimulation of [3H]ryanodine binding to RYR1" evidence="2">
    <location>
        <position position="66"/>
    </location>
</feature>
<feature type="disulfide bond" evidence="2">
    <location>
        <begin position="36"/>
        <end position="50"/>
    </location>
</feature>
<feature type="disulfide bond" evidence="2">
    <location>
        <begin position="43"/>
        <end position="54"/>
    </location>
</feature>
<feature type="disulfide bond" evidence="2">
    <location>
        <begin position="49"/>
        <end position="65"/>
    </location>
</feature>